<evidence type="ECO:0000255" key="1">
    <source>
        <dbReference type="HAMAP-Rule" id="MF_02004"/>
    </source>
</evidence>
<reference key="1">
    <citation type="journal article" date="2008" name="Genome Biol.">
        <title>Encapsulated in silica: genome, proteome and physiology of the thermophilic bacterium Anoxybacillus flavithermus WK1.</title>
        <authorList>
            <person name="Saw J.H."/>
            <person name="Mountain B.W."/>
            <person name="Feng L."/>
            <person name="Omelchenko M.V."/>
            <person name="Hou S."/>
            <person name="Saito J.A."/>
            <person name="Stott M.B."/>
            <person name="Li D."/>
            <person name="Zhao G."/>
            <person name="Wu J."/>
            <person name="Galperin M.Y."/>
            <person name="Koonin E.V."/>
            <person name="Makarova K.S."/>
            <person name="Wolf Y.I."/>
            <person name="Rigden D.J."/>
            <person name="Dunfield P.F."/>
            <person name="Wang L."/>
            <person name="Alam M."/>
        </authorList>
    </citation>
    <scope>NUCLEOTIDE SEQUENCE [LARGE SCALE GENOMIC DNA]</scope>
    <source>
        <strain>DSM 21510 / WK1</strain>
    </source>
</reference>
<sequence>MMLPPKYDHRAVEANRYEWWLKGKFFEATSDETKKPFTIVIPPPNVTGKLHLGHAWDTTLQDIITRMKRMQGYDVLWLPGMDHAGIATQAKVEEKLRNEGKTRYDLGREKFVEETWKWKEEYAGHIRSQWAKLGLGLDYTRERFTLDEGLSKAVREVFVSLYKKGLIYRGEYIINWDPVTKTALSDIEVVYKDVQGALYHMRYPLADGSGYIEVATTRPETMLGDTAVAVHPEDERYKHLIGKTVILPIVGREIPIIGDEYVDMSFGSGAVKITPAHDPNDFEIGNRHHLPRILVMNEDGTMNDNALQYKGLDRFECRKQIVKDLQEQGVLFKIEEHMHSVGHSERSGAVVEPYLSTQWFVKMKPLAEAAIEQQKTEGKVNFVPERFEKTYLHWMENIRDWCISRQLWWGHRIPAWYHKETGEVYVDHEPPADIENWEQDQDVLDTWFSSALWPFSTMGWPDKTSADYNRYYPTDVLVTGYDIIFFWVSRMIFQALEFTGKRPFKDVLIHGLVRDAQGRKMSKSLGNGVDPMDVIDQYGADSLRYFLATGSSPGQDLRFSTEKVEATWNFVNKIWNASRFALMNMEGFTYEDIDLHGEKSVADHWILTRLNETIETVTKLADKYEFGEVGRVLYNFIWDDLCDWYIEMAKLPLYGDDEQAKKTTRSVLAYVLDQTMRLLHPFMPFVTEEIWQQLPHEGESITVASWPQVRPELSNHEAAETMRLLVDIIRAVRNIRAEVNTPLSKPITLYIKAKDEHVKATLETNRAYIERFCNPSELVIDTTIPTVEKAMTAVVTGAELSLPLEGLINIEEEVKRLEKELQKLDQEVERVQKKLSNEGFLAKAPAHVVEEERKKERDYIEKREAVRARLAQLKQ</sequence>
<keyword id="KW-0030">Aminoacyl-tRNA synthetase</keyword>
<keyword id="KW-0067">ATP-binding</keyword>
<keyword id="KW-0175">Coiled coil</keyword>
<keyword id="KW-0963">Cytoplasm</keyword>
<keyword id="KW-0436">Ligase</keyword>
<keyword id="KW-0547">Nucleotide-binding</keyword>
<keyword id="KW-0648">Protein biosynthesis</keyword>
<feature type="chain" id="PRO_1000189240" description="Valine--tRNA ligase">
    <location>
        <begin position="1"/>
        <end position="875"/>
    </location>
</feature>
<feature type="coiled-coil region" evidence="1">
    <location>
        <begin position="804"/>
        <end position="875"/>
    </location>
</feature>
<feature type="short sequence motif" description="'HIGH' region">
    <location>
        <begin position="44"/>
        <end position="54"/>
    </location>
</feature>
<feature type="short sequence motif" description="'KMSKS' region">
    <location>
        <begin position="520"/>
        <end position="524"/>
    </location>
</feature>
<feature type="binding site" evidence="1">
    <location>
        <position position="523"/>
    </location>
    <ligand>
        <name>ATP</name>
        <dbReference type="ChEBI" id="CHEBI:30616"/>
    </ligand>
</feature>
<protein>
    <recommendedName>
        <fullName evidence="1">Valine--tRNA ligase</fullName>
        <ecNumber evidence="1">6.1.1.9</ecNumber>
    </recommendedName>
    <alternativeName>
        <fullName evidence="1">Valyl-tRNA synthetase</fullName>
        <shortName evidence="1">ValRS</shortName>
    </alternativeName>
</protein>
<accession>B7GH39</accession>
<dbReference type="EC" id="6.1.1.9" evidence="1"/>
<dbReference type="EMBL" id="CP000922">
    <property type="protein sequence ID" value="ACJ32995.1"/>
    <property type="molecule type" value="Genomic_DNA"/>
</dbReference>
<dbReference type="RefSeq" id="WP_012574301.1">
    <property type="nucleotide sequence ID" value="NC_011567.1"/>
</dbReference>
<dbReference type="SMR" id="B7GH39"/>
<dbReference type="STRING" id="491915.Aflv_0614"/>
<dbReference type="GeneID" id="7036871"/>
<dbReference type="KEGG" id="afl:Aflv_0614"/>
<dbReference type="eggNOG" id="COG0525">
    <property type="taxonomic scope" value="Bacteria"/>
</dbReference>
<dbReference type="HOGENOM" id="CLU_001493_0_2_9"/>
<dbReference type="Proteomes" id="UP000000742">
    <property type="component" value="Chromosome"/>
</dbReference>
<dbReference type="GO" id="GO:0005829">
    <property type="term" value="C:cytosol"/>
    <property type="evidence" value="ECO:0007669"/>
    <property type="project" value="TreeGrafter"/>
</dbReference>
<dbReference type="GO" id="GO:0002161">
    <property type="term" value="F:aminoacyl-tRNA deacylase activity"/>
    <property type="evidence" value="ECO:0007669"/>
    <property type="project" value="InterPro"/>
</dbReference>
<dbReference type="GO" id="GO:0005524">
    <property type="term" value="F:ATP binding"/>
    <property type="evidence" value="ECO:0007669"/>
    <property type="project" value="UniProtKB-UniRule"/>
</dbReference>
<dbReference type="GO" id="GO:0004832">
    <property type="term" value="F:valine-tRNA ligase activity"/>
    <property type="evidence" value="ECO:0007669"/>
    <property type="project" value="UniProtKB-UniRule"/>
</dbReference>
<dbReference type="GO" id="GO:0006438">
    <property type="term" value="P:valyl-tRNA aminoacylation"/>
    <property type="evidence" value="ECO:0007669"/>
    <property type="project" value="UniProtKB-UniRule"/>
</dbReference>
<dbReference type="CDD" id="cd07962">
    <property type="entry name" value="Anticodon_Ia_Val"/>
    <property type="match status" value="1"/>
</dbReference>
<dbReference type="CDD" id="cd00817">
    <property type="entry name" value="ValRS_core"/>
    <property type="match status" value="1"/>
</dbReference>
<dbReference type="FunFam" id="1.10.287.380:FF:000001">
    <property type="entry name" value="Valine--tRNA ligase"/>
    <property type="match status" value="1"/>
</dbReference>
<dbReference type="FunFam" id="1.10.730.10:FF:000014">
    <property type="entry name" value="Valine--tRNA ligase"/>
    <property type="match status" value="1"/>
</dbReference>
<dbReference type="FunFam" id="3.40.50.620:FF:000032">
    <property type="entry name" value="Valine--tRNA ligase"/>
    <property type="match status" value="1"/>
</dbReference>
<dbReference type="FunFam" id="3.40.50.620:FF:000098">
    <property type="entry name" value="Valine--tRNA ligase"/>
    <property type="match status" value="1"/>
</dbReference>
<dbReference type="FunFam" id="3.90.740.10:FF:000005">
    <property type="entry name" value="Valine--tRNA ligase, mitochondrial"/>
    <property type="match status" value="1"/>
</dbReference>
<dbReference type="Gene3D" id="3.40.50.620">
    <property type="entry name" value="HUPs"/>
    <property type="match status" value="2"/>
</dbReference>
<dbReference type="Gene3D" id="1.10.730.10">
    <property type="entry name" value="Isoleucyl-tRNA Synthetase, Domain 1"/>
    <property type="match status" value="1"/>
</dbReference>
<dbReference type="Gene3D" id="1.10.287.380">
    <property type="entry name" value="Valyl-tRNA synthetase, C-terminal domain"/>
    <property type="match status" value="1"/>
</dbReference>
<dbReference type="Gene3D" id="3.90.740.10">
    <property type="entry name" value="Valyl/Leucyl/Isoleucyl-tRNA synthetase, editing domain"/>
    <property type="match status" value="1"/>
</dbReference>
<dbReference type="HAMAP" id="MF_02004">
    <property type="entry name" value="Val_tRNA_synth_type1"/>
    <property type="match status" value="1"/>
</dbReference>
<dbReference type="InterPro" id="IPR001412">
    <property type="entry name" value="aa-tRNA-synth_I_CS"/>
</dbReference>
<dbReference type="InterPro" id="IPR002300">
    <property type="entry name" value="aa-tRNA-synth_Ia"/>
</dbReference>
<dbReference type="InterPro" id="IPR033705">
    <property type="entry name" value="Anticodon_Ia_Val"/>
</dbReference>
<dbReference type="InterPro" id="IPR013155">
    <property type="entry name" value="M/V/L/I-tRNA-synth_anticd-bd"/>
</dbReference>
<dbReference type="InterPro" id="IPR014729">
    <property type="entry name" value="Rossmann-like_a/b/a_fold"/>
</dbReference>
<dbReference type="InterPro" id="IPR010978">
    <property type="entry name" value="tRNA-bd_arm"/>
</dbReference>
<dbReference type="InterPro" id="IPR009080">
    <property type="entry name" value="tRNAsynth_Ia_anticodon-bd"/>
</dbReference>
<dbReference type="InterPro" id="IPR037118">
    <property type="entry name" value="Val-tRNA_synth_C_sf"/>
</dbReference>
<dbReference type="InterPro" id="IPR019499">
    <property type="entry name" value="Val-tRNA_synth_tRNA-bd"/>
</dbReference>
<dbReference type="InterPro" id="IPR009008">
    <property type="entry name" value="Val/Leu/Ile-tRNA-synth_edit"/>
</dbReference>
<dbReference type="InterPro" id="IPR002303">
    <property type="entry name" value="Valyl-tRNA_ligase"/>
</dbReference>
<dbReference type="NCBIfam" id="NF004349">
    <property type="entry name" value="PRK05729.1"/>
    <property type="match status" value="1"/>
</dbReference>
<dbReference type="NCBIfam" id="TIGR00422">
    <property type="entry name" value="valS"/>
    <property type="match status" value="1"/>
</dbReference>
<dbReference type="PANTHER" id="PTHR11946:SF93">
    <property type="entry name" value="VALINE--TRNA LIGASE, CHLOROPLASTIC_MITOCHONDRIAL 2"/>
    <property type="match status" value="1"/>
</dbReference>
<dbReference type="PANTHER" id="PTHR11946">
    <property type="entry name" value="VALYL-TRNA SYNTHETASES"/>
    <property type="match status" value="1"/>
</dbReference>
<dbReference type="Pfam" id="PF08264">
    <property type="entry name" value="Anticodon_1"/>
    <property type="match status" value="1"/>
</dbReference>
<dbReference type="Pfam" id="PF00133">
    <property type="entry name" value="tRNA-synt_1"/>
    <property type="match status" value="2"/>
</dbReference>
<dbReference type="Pfam" id="PF10458">
    <property type="entry name" value="Val_tRNA-synt_C"/>
    <property type="match status" value="1"/>
</dbReference>
<dbReference type="PRINTS" id="PR00986">
    <property type="entry name" value="TRNASYNTHVAL"/>
</dbReference>
<dbReference type="SUPFAM" id="SSF47323">
    <property type="entry name" value="Anticodon-binding domain of a subclass of class I aminoacyl-tRNA synthetases"/>
    <property type="match status" value="1"/>
</dbReference>
<dbReference type="SUPFAM" id="SSF52374">
    <property type="entry name" value="Nucleotidylyl transferase"/>
    <property type="match status" value="1"/>
</dbReference>
<dbReference type="SUPFAM" id="SSF46589">
    <property type="entry name" value="tRNA-binding arm"/>
    <property type="match status" value="1"/>
</dbReference>
<dbReference type="SUPFAM" id="SSF50677">
    <property type="entry name" value="ValRS/IleRS/LeuRS editing domain"/>
    <property type="match status" value="1"/>
</dbReference>
<dbReference type="PROSITE" id="PS00178">
    <property type="entry name" value="AA_TRNA_LIGASE_I"/>
    <property type="match status" value="1"/>
</dbReference>
<organism>
    <name type="scientific">Anoxybacillus flavithermus (strain DSM 21510 / WK1)</name>
    <dbReference type="NCBI Taxonomy" id="491915"/>
    <lineage>
        <taxon>Bacteria</taxon>
        <taxon>Bacillati</taxon>
        <taxon>Bacillota</taxon>
        <taxon>Bacilli</taxon>
        <taxon>Bacillales</taxon>
        <taxon>Anoxybacillaceae</taxon>
        <taxon>Anoxybacillus</taxon>
    </lineage>
</organism>
<name>SYV_ANOFW</name>
<proteinExistence type="inferred from homology"/>
<comment type="function">
    <text evidence="1">Catalyzes the attachment of valine to tRNA(Val). As ValRS can inadvertently accommodate and process structurally similar amino acids such as threonine, to avoid such errors, it has a 'posttransfer' editing activity that hydrolyzes mischarged Thr-tRNA(Val) in a tRNA-dependent manner.</text>
</comment>
<comment type="catalytic activity">
    <reaction evidence="1">
        <text>tRNA(Val) + L-valine + ATP = L-valyl-tRNA(Val) + AMP + diphosphate</text>
        <dbReference type="Rhea" id="RHEA:10704"/>
        <dbReference type="Rhea" id="RHEA-COMP:9672"/>
        <dbReference type="Rhea" id="RHEA-COMP:9708"/>
        <dbReference type="ChEBI" id="CHEBI:30616"/>
        <dbReference type="ChEBI" id="CHEBI:33019"/>
        <dbReference type="ChEBI" id="CHEBI:57762"/>
        <dbReference type="ChEBI" id="CHEBI:78442"/>
        <dbReference type="ChEBI" id="CHEBI:78537"/>
        <dbReference type="ChEBI" id="CHEBI:456215"/>
        <dbReference type="EC" id="6.1.1.9"/>
    </reaction>
</comment>
<comment type="subunit">
    <text evidence="1">Monomer.</text>
</comment>
<comment type="subcellular location">
    <subcellularLocation>
        <location evidence="1">Cytoplasm</location>
    </subcellularLocation>
</comment>
<comment type="domain">
    <text evidence="1">ValRS has two distinct active sites: one for aminoacylation and one for editing. The misactivated threonine is translocated from the active site to the editing site.</text>
</comment>
<comment type="domain">
    <text evidence="1">The C-terminal coiled-coil domain is crucial for aminoacylation activity.</text>
</comment>
<comment type="similarity">
    <text evidence="1">Belongs to the class-I aminoacyl-tRNA synthetase family. ValS type 1 subfamily.</text>
</comment>
<gene>
    <name evidence="1" type="primary">valS</name>
    <name type="ordered locus">Aflv_0614</name>
</gene>